<sequence length="1025" mass="111010">MKFFALFIYRPVATILLSVAITLCGILGFRMLPVAPLPQVDFPVIIVSASLPGASPETMASSVATPLERSLGRIAGVSEMTSSSSLGSTRIILQFDFDRDINGAARDVQAAINAAQSLLPSGMPSRPTYRKANPSDAPIMILTLTSDTYSQGELYDFASTQLAPTISQIDGVGDVDVGGSSLPAVRVGLNPQALFNQGVSLDDVRTAVSNANVRKPQGALEDGTHRWQIQTNDELKTAAEYQPLIIHYNNGGAVRLGDVATVTDSVQDVRNAGMTNAKPAILLMIRKLPEANIIQTVDSIRAKLPELQETIPAAIDLQIAQDRSPTIRASLEEVEQTLIISVALVILVVFLFLRSGRATIIPAVSVPVSLIGTFAAMYLCGFSLNNLSLMALTIATGFVVDDAIVVLENIARHLEAGMKPLQAALQGTREVGFTVLSMSLSLVAVFLPLLLMGGLPGRLLREFAVTLSVAIGISLLVSLTLTPMMCGWMLKASKPREQKRLRGFGRMLVALQQGYGKSLKWVLNHTRLVGVVLLGTIALNIWLYISIPKTFFPEQDTGVLMGGIQADQSISFQAMRGKLQDFMKIIRDDPAVDNVTGFTGGSRVNSGMMFITLKPRDERSETAQQIIDRLRVKLAKEPGANLFLMAVQDIRVGGRQSNASYQYTLLSDDLAALREWEPKIRKKLATLPELADVNSDQQDNGAEMNLVYDRDTMARLGIDVQAANSLLNNAFGQRQISTIYQPMNQYKVVMEVDPRYTQDISALEKMFVINNEGKAIPLSYFAKWQPANAPLSVNHQGLSAASTISFNLPTGKSLSDASAAIDRAMTQLGVPSTVRGSFAGTAQVFQETMNSQVILIIAAIATVYIVLGILYESYVHPLTILSTLPSAGVGALLALELFNAPFSLIALIGIMLLIGIVKKNAIMMVDFALEAQRHGNLTPQEAIFQACLLRFRPIMMTTLAALFGALPLVLSGGDGSELRQPLGITIVGGLVMSQLLTLYTTPVVYLFFDRLRLRFSRKPKQTVTE</sequence>
<proteinExistence type="evidence at transcript level"/>
<name>MDTC_ECOBW</name>
<dbReference type="EMBL" id="CP001396">
    <property type="protein sequence ID" value="ACR63822.1"/>
    <property type="molecule type" value="Genomic_DNA"/>
</dbReference>
<dbReference type="RefSeq" id="WP_000667481.1">
    <property type="nucleotide sequence ID" value="NC_012759.1"/>
</dbReference>
<dbReference type="SMR" id="C4ZSG4"/>
<dbReference type="KEGG" id="ebw:BWG_1866"/>
<dbReference type="HOGENOM" id="CLU_002755_1_2_6"/>
<dbReference type="GO" id="GO:0005886">
    <property type="term" value="C:plasma membrane"/>
    <property type="evidence" value="ECO:0007669"/>
    <property type="project" value="UniProtKB-SubCell"/>
</dbReference>
<dbReference type="GO" id="GO:0042910">
    <property type="term" value="F:xenobiotic transmembrane transporter activity"/>
    <property type="evidence" value="ECO:0007669"/>
    <property type="project" value="TreeGrafter"/>
</dbReference>
<dbReference type="FunFam" id="1.20.1640.10:FF:000001">
    <property type="entry name" value="Efflux pump membrane transporter"/>
    <property type="match status" value="1"/>
</dbReference>
<dbReference type="FunFam" id="3.30.70.1430:FF:000001">
    <property type="entry name" value="Efflux pump membrane transporter"/>
    <property type="match status" value="1"/>
</dbReference>
<dbReference type="FunFam" id="3.30.2090.10:FF:000004">
    <property type="entry name" value="Multidrug resistance protein MdtC"/>
    <property type="match status" value="1"/>
</dbReference>
<dbReference type="FunFam" id="3.30.2090.10:FF:000005">
    <property type="entry name" value="Multidrug resistance protein MdtC"/>
    <property type="match status" value="1"/>
</dbReference>
<dbReference type="FunFam" id="3.30.70.1430:FF:000004">
    <property type="entry name" value="Multidrug resistance protein MdtC"/>
    <property type="match status" value="1"/>
</dbReference>
<dbReference type="Gene3D" id="3.30.70.1430">
    <property type="entry name" value="Multidrug efflux transporter AcrB pore domain"/>
    <property type="match status" value="2"/>
</dbReference>
<dbReference type="Gene3D" id="3.30.70.1440">
    <property type="entry name" value="Multidrug efflux transporter AcrB pore domain"/>
    <property type="match status" value="1"/>
</dbReference>
<dbReference type="Gene3D" id="3.30.70.1320">
    <property type="entry name" value="Multidrug efflux transporter AcrB pore domain like"/>
    <property type="match status" value="1"/>
</dbReference>
<dbReference type="Gene3D" id="3.30.2090.10">
    <property type="entry name" value="Multidrug efflux transporter AcrB TolC docking domain, DN and DC subdomains"/>
    <property type="match status" value="2"/>
</dbReference>
<dbReference type="Gene3D" id="1.20.1640.10">
    <property type="entry name" value="Multidrug efflux transporter AcrB transmembrane domain"/>
    <property type="match status" value="2"/>
</dbReference>
<dbReference type="HAMAP" id="MF_01424">
    <property type="entry name" value="MdtC"/>
    <property type="match status" value="1"/>
</dbReference>
<dbReference type="InterPro" id="IPR027463">
    <property type="entry name" value="AcrB_DN_DC_subdom"/>
</dbReference>
<dbReference type="InterPro" id="IPR001036">
    <property type="entry name" value="Acrflvin-R"/>
</dbReference>
<dbReference type="InterPro" id="IPR023931">
    <property type="entry name" value="Multidrug-R_MdtC"/>
</dbReference>
<dbReference type="NCBIfam" id="NF007905">
    <property type="entry name" value="PRK10614.1"/>
    <property type="match status" value="1"/>
</dbReference>
<dbReference type="NCBIfam" id="NF033617">
    <property type="entry name" value="RND_permease_2"/>
    <property type="match status" value="1"/>
</dbReference>
<dbReference type="PANTHER" id="PTHR32063">
    <property type="match status" value="1"/>
</dbReference>
<dbReference type="PANTHER" id="PTHR32063:SF34">
    <property type="entry name" value="MULTIDRUG RESISTANCE PROTEIN MDTC"/>
    <property type="match status" value="1"/>
</dbReference>
<dbReference type="Pfam" id="PF00873">
    <property type="entry name" value="ACR_tran"/>
    <property type="match status" value="1"/>
</dbReference>
<dbReference type="PRINTS" id="PR00702">
    <property type="entry name" value="ACRIFLAVINRP"/>
</dbReference>
<dbReference type="SUPFAM" id="SSF82693">
    <property type="entry name" value="Multidrug efflux transporter AcrB pore domain, PN1, PN2, PC1 and PC2 subdomains"/>
    <property type="match status" value="4"/>
</dbReference>
<dbReference type="SUPFAM" id="SSF82714">
    <property type="entry name" value="Multidrug efflux transporter AcrB TolC docking domain, DN and DC subdomains"/>
    <property type="match status" value="2"/>
</dbReference>
<dbReference type="SUPFAM" id="SSF82866">
    <property type="entry name" value="Multidrug efflux transporter AcrB transmembrane domain"/>
    <property type="match status" value="2"/>
</dbReference>
<gene>
    <name evidence="1" type="primary">mdtC</name>
    <name type="ordered locus">BWG_1866</name>
</gene>
<accession>C4ZSG4</accession>
<organism>
    <name type="scientific">Escherichia coli (strain K12 / MC4100 / BW2952)</name>
    <dbReference type="NCBI Taxonomy" id="595496"/>
    <lineage>
        <taxon>Bacteria</taxon>
        <taxon>Pseudomonadati</taxon>
        <taxon>Pseudomonadota</taxon>
        <taxon>Gammaproteobacteria</taxon>
        <taxon>Enterobacterales</taxon>
        <taxon>Enterobacteriaceae</taxon>
        <taxon>Escherichia</taxon>
    </lineage>
</organism>
<evidence type="ECO:0000255" key="1">
    <source>
        <dbReference type="HAMAP-Rule" id="MF_01424"/>
    </source>
</evidence>
<reference key="1">
    <citation type="journal article" date="2009" name="J. Bacteriol.">
        <title>Genomic sequencing reveals regulatory mutations and recombinational events in the widely used MC4100 lineage of Escherichia coli K-12.</title>
        <authorList>
            <person name="Ferenci T."/>
            <person name="Zhou Z."/>
            <person name="Betteridge T."/>
            <person name="Ren Y."/>
            <person name="Liu Y."/>
            <person name="Feng L."/>
            <person name="Reeves P.R."/>
            <person name="Wang L."/>
        </authorList>
    </citation>
    <scope>NUCLEOTIDE SEQUENCE [LARGE SCALE GENOMIC DNA]</scope>
    <source>
        <strain>K12 / MC4100 / BW2952</strain>
    </source>
</reference>
<protein>
    <recommendedName>
        <fullName evidence="1">Multidrug resistance protein MdtC</fullName>
    </recommendedName>
    <alternativeName>
        <fullName evidence="1">Multidrug transporter MdtC</fullName>
    </alternativeName>
</protein>
<keyword id="KW-0997">Cell inner membrane</keyword>
<keyword id="KW-1003">Cell membrane</keyword>
<keyword id="KW-0472">Membrane</keyword>
<keyword id="KW-0812">Transmembrane</keyword>
<keyword id="KW-1133">Transmembrane helix</keyword>
<keyword id="KW-0813">Transport</keyword>
<comment type="function">
    <text evidence="1">The MdtABC tripartite complex confers resistance against novobiocin and deoxycholate.</text>
</comment>
<comment type="subunit">
    <text evidence="1">Part of a tripartite efflux system composed of MdtA, MdtB and MdtC. MdtC forms a heteromultimer with MdtB.</text>
</comment>
<comment type="subcellular location">
    <subcellularLocation>
        <location evidence="1">Cell inner membrane</location>
        <topology evidence="1">Multi-pass membrane protein</topology>
    </subcellularLocation>
</comment>
<comment type="induction">
    <text>The mdtABC operon is transcriptionally activated by BaeR.</text>
</comment>
<comment type="similarity">
    <text evidence="1">Belongs to the resistance-nodulation-cell division (RND) (TC 2.A.6) family. MdtC subfamily.</text>
</comment>
<feature type="chain" id="PRO_1000215262" description="Multidrug resistance protein MdtC">
    <location>
        <begin position="1"/>
        <end position="1025"/>
    </location>
</feature>
<feature type="transmembrane region" description="Helical" evidence="1">
    <location>
        <begin position="3"/>
        <end position="23"/>
    </location>
</feature>
<feature type="transmembrane region" description="Helical" evidence="1">
    <location>
        <begin position="333"/>
        <end position="353"/>
    </location>
</feature>
<feature type="transmembrane region" description="Helical" evidence="1">
    <location>
        <begin position="360"/>
        <end position="380"/>
    </location>
</feature>
<feature type="transmembrane region" description="Helical" evidence="1">
    <location>
        <begin position="387"/>
        <end position="407"/>
    </location>
</feature>
<feature type="transmembrane region" description="Helical" evidence="1">
    <location>
        <begin position="431"/>
        <end position="451"/>
    </location>
</feature>
<feature type="transmembrane region" description="Helical" evidence="1">
    <location>
        <begin position="463"/>
        <end position="483"/>
    </location>
</feature>
<feature type="transmembrane region" description="Helical" evidence="1">
    <location>
        <begin position="528"/>
        <end position="548"/>
    </location>
</feature>
<feature type="transmembrane region" description="Helical" evidence="1">
    <location>
        <begin position="853"/>
        <end position="873"/>
    </location>
</feature>
<feature type="transmembrane region" description="Helical" evidence="1">
    <location>
        <begin position="875"/>
        <end position="895"/>
    </location>
</feature>
<feature type="transmembrane region" description="Helical" evidence="1">
    <location>
        <begin position="897"/>
        <end position="917"/>
    </location>
</feature>
<feature type="transmembrane region" description="Helical" evidence="1">
    <location>
        <begin position="953"/>
        <end position="973"/>
    </location>
</feature>
<feature type="transmembrane region" description="Helical" evidence="1">
    <location>
        <begin position="984"/>
        <end position="1004"/>
    </location>
</feature>